<evidence type="ECO:0000255" key="1">
    <source>
        <dbReference type="HAMAP-Rule" id="MF_00358"/>
    </source>
</evidence>
<evidence type="ECO:0000256" key="2">
    <source>
        <dbReference type="SAM" id="MobiDB-lite"/>
    </source>
</evidence>
<evidence type="ECO:0000305" key="3"/>
<feature type="chain" id="PRO_0000266658" description="Small ribosomal subunit protein bS21">
    <location>
        <begin position="1"/>
        <end position="58"/>
    </location>
</feature>
<feature type="region of interest" description="Disordered" evidence="2">
    <location>
        <begin position="30"/>
        <end position="58"/>
    </location>
</feature>
<feature type="compositionally biased region" description="Basic and acidic residues" evidence="2">
    <location>
        <begin position="31"/>
        <end position="42"/>
    </location>
</feature>
<feature type="compositionally biased region" description="Basic residues" evidence="2">
    <location>
        <begin position="43"/>
        <end position="58"/>
    </location>
</feature>
<name>RS21_CLOPS</name>
<protein>
    <recommendedName>
        <fullName evidence="1">Small ribosomal subunit protein bS21</fullName>
    </recommendedName>
    <alternativeName>
        <fullName evidence="3">30S ribosomal protein S21</fullName>
    </alternativeName>
</protein>
<keyword id="KW-0687">Ribonucleoprotein</keyword>
<keyword id="KW-0689">Ribosomal protein</keyword>
<accession>Q0SRF3</accession>
<gene>
    <name evidence="1" type="primary">rpsU</name>
    <name type="ordered locus">CPR_1995</name>
</gene>
<sequence length="58" mass="7016">MSEIRVKENESLEQALRRFKRQCARAGVLSEVRKREHYEKPSVKRKKKSEAARKRKFK</sequence>
<reference key="1">
    <citation type="journal article" date="2006" name="Genome Res.">
        <title>Skewed genomic variability in strains of the toxigenic bacterial pathogen, Clostridium perfringens.</title>
        <authorList>
            <person name="Myers G.S.A."/>
            <person name="Rasko D.A."/>
            <person name="Cheung J.K."/>
            <person name="Ravel J."/>
            <person name="Seshadri R."/>
            <person name="DeBoy R.T."/>
            <person name="Ren Q."/>
            <person name="Varga J."/>
            <person name="Awad M.M."/>
            <person name="Brinkac L.M."/>
            <person name="Daugherty S.C."/>
            <person name="Haft D.H."/>
            <person name="Dodson R.J."/>
            <person name="Madupu R."/>
            <person name="Nelson W.C."/>
            <person name="Rosovitz M.J."/>
            <person name="Sullivan S.A."/>
            <person name="Khouri H."/>
            <person name="Dimitrov G.I."/>
            <person name="Watkins K.L."/>
            <person name="Mulligan S."/>
            <person name="Benton J."/>
            <person name="Radune D."/>
            <person name="Fisher D.J."/>
            <person name="Atkins H.S."/>
            <person name="Hiscox T."/>
            <person name="Jost B.H."/>
            <person name="Billington S.J."/>
            <person name="Songer J.G."/>
            <person name="McClane B.A."/>
            <person name="Titball R.W."/>
            <person name="Rood J.I."/>
            <person name="Melville S.B."/>
            <person name="Paulsen I.T."/>
        </authorList>
    </citation>
    <scope>NUCLEOTIDE SEQUENCE [LARGE SCALE GENOMIC DNA]</scope>
    <source>
        <strain>SM101 / Type A</strain>
    </source>
</reference>
<dbReference type="EMBL" id="CP000312">
    <property type="protein sequence ID" value="ABG86112.1"/>
    <property type="molecule type" value="Genomic_DNA"/>
</dbReference>
<dbReference type="RefSeq" id="WP_003451446.1">
    <property type="nucleotide sequence ID" value="NZ_CAXVKH010000005.1"/>
</dbReference>
<dbReference type="SMR" id="Q0SRF3"/>
<dbReference type="GeneID" id="93001439"/>
<dbReference type="KEGG" id="cpr:CPR_1995"/>
<dbReference type="Proteomes" id="UP000001824">
    <property type="component" value="Chromosome"/>
</dbReference>
<dbReference type="GO" id="GO:1990904">
    <property type="term" value="C:ribonucleoprotein complex"/>
    <property type="evidence" value="ECO:0007669"/>
    <property type="project" value="UniProtKB-KW"/>
</dbReference>
<dbReference type="GO" id="GO:0005840">
    <property type="term" value="C:ribosome"/>
    <property type="evidence" value="ECO:0007669"/>
    <property type="project" value="UniProtKB-KW"/>
</dbReference>
<dbReference type="GO" id="GO:0003735">
    <property type="term" value="F:structural constituent of ribosome"/>
    <property type="evidence" value="ECO:0007669"/>
    <property type="project" value="InterPro"/>
</dbReference>
<dbReference type="GO" id="GO:0006412">
    <property type="term" value="P:translation"/>
    <property type="evidence" value="ECO:0007669"/>
    <property type="project" value="UniProtKB-UniRule"/>
</dbReference>
<dbReference type="Gene3D" id="1.20.5.1150">
    <property type="entry name" value="Ribosomal protein S8"/>
    <property type="match status" value="1"/>
</dbReference>
<dbReference type="HAMAP" id="MF_00358">
    <property type="entry name" value="Ribosomal_bS21"/>
    <property type="match status" value="1"/>
</dbReference>
<dbReference type="InterPro" id="IPR001911">
    <property type="entry name" value="Ribosomal_bS21"/>
</dbReference>
<dbReference type="InterPro" id="IPR018278">
    <property type="entry name" value="Ribosomal_bS21_CS"/>
</dbReference>
<dbReference type="InterPro" id="IPR038380">
    <property type="entry name" value="Ribosomal_bS21_sf"/>
</dbReference>
<dbReference type="NCBIfam" id="TIGR00030">
    <property type="entry name" value="S21p"/>
    <property type="match status" value="1"/>
</dbReference>
<dbReference type="PANTHER" id="PTHR21109">
    <property type="entry name" value="MITOCHONDRIAL 28S RIBOSOMAL PROTEIN S21"/>
    <property type="match status" value="1"/>
</dbReference>
<dbReference type="PANTHER" id="PTHR21109:SF22">
    <property type="entry name" value="SMALL RIBOSOMAL SUBUNIT PROTEIN BS21"/>
    <property type="match status" value="1"/>
</dbReference>
<dbReference type="Pfam" id="PF01165">
    <property type="entry name" value="Ribosomal_S21"/>
    <property type="match status" value="1"/>
</dbReference>
<dbReference type="PRINTS" id="PR00976">
    <property type="entry name" value="RIBOSOMALS21"/>
</dbReference>
<dbReference type="PROSITE" id="PS01181">
    <property type="entry name" value="RIBOSOMAL_S21"/>
    <property type="match status" value="1"/>
</dbReference>
<comment type="similarity">
    <text evidence="1">Belongs to the bacterial ribosomal protein bS21 family.</text>
</comment>
<organism>
    <name type="scientific">Clostridium perfringens (strain SM101 / Type A)</name>
    <dbReference type="NCBI Taxonomy" id="289380"/>
    <lineage>
        <taxon>Bacteria</taxon>
        <taxon>Bacillati</taxon>
        <taxon>Bacillota</taxon>
        <taxon>Clostridia</taxon>
        <taxon>Eubacteriales</taxon>
        <taxon>Clostridiaceae</taxon>
        <taxon>Clostridium</taxon>
    </lineage>
</organism>
<proteinExistence type="inferred from homology"/>